<evidence type="ECO:0000250" key="1"/>
<evidence type="ECO:0000256" key="2">
    <source>
        <dbReference type="SAM" id="MobiDB-lite"/>
    </source>
</evidence>
<evidence type="ECO:0000305" key="3"/>
<sequence length="361" mass="41779">MTKGKGRNPGASGLDKHLKRKTHLERSQPKSRQHLGQLEKHKDHVLRAKKRKVKVRRLQEIKRAAAQRNPDEFNIGMTKAVMDVANGRMRQRRVRLVESDRKKDMQTTIEHNRRNVQYLEFKAQADQQRATELLNEEAAAALTSTAPQNKHIVFVNSEEEFRSFNPLKHFDVTPEMMRQHPAVRGRIRVLEKTVMPEEILMSGGHQIKSAAQKRKERREVQEKMRRSGADATPETRAAFVERLRAKKELKQYQFTDLLEEVKRESEATASSSKGAPGDDGEQEEAAAQDEVTRLLEWRREQERQAAIATARHVREVGQRIQRSKSLSALAKSIRKQSQGIKRQMEQRRESRFKPGATRRAR</sequence>
<keyword id="KW-0539">Nucleus</keyword>
<keyword id="KW-1185">Reference proteome</keyword>
<keyword id="KW-0698">rRNA processing</keyword>
<gene>
    <name type="ORF">L374.02</name>
    <name type="ORF">LmjF19.0670</name>
    <name type="ORF">LmjF_19_0670</name>
</gene>
<reference key="1">
    <citation type="journal article" date="2005" name="Science">
        <title>The genome of the kinetoplastid parasite, Leishmania major.</title>
        <authorList>
            <person name="Ivens A.C."/>
            <person name="Peacock C.S."/>
            <person name="Worthey E.A."/>
            <person name="Murphy L."/>
            <person name="Aggarwal G."/>
            <person name="Berriman M."/>
            <person name="Sisk E."/>
            <person name="Rajandream M.A."/>
            <person name="Adlem E."/>
            <person name="Aert R."/>
            <person name="Anupama A."/>
            <person name="Apostolou Z."/>
            <person name="Attipoe P."/>
            <person name="Bason N."/>
            <person name="Bauser C."/>
            <person name="Beck A."/>
            <person name="Beverley S.M."/>
            <person name="Bianchettin G."/>
            <person name="Borzym K."/>
            <person name="Bothe G."/>
            <person name="Bruschi C.V."/>
            <person name="Collins M."/>
            <person name="Cadag E."/>
            <person name="Ciarloni L."/>
            <person name="Clayton C."/>
            <person name="Coulson R.M.R."/>
            <person name="Cronin A."/>
            <person name="Cruz A.K."/>
            <person name="Davies R.M."/>
            <person name="De Gaudenzi J."/>
            <person name="Dobson D.E."/>
            <person name="Duesterhoeft A."/>
            <person name="Fazelina G."/>
            <person name="Fosker N."/>
            <person name="Frasch A.C."/>
            <person name="Fraser A."/>
            <person name="Fuchs M."/>
            <person name="Gabel C."/>
            <person name="Goble A."/>
            <person name="Goffeau A."/>
            <person name="Harris D."/>
            <person name="Hertz-Fowler C."/>
            <person name="Hilbert H."/>
            <person name="Horn D."/>
            <person name="Huang Y."/>
            <person name="Klages S."/>
            <person name="Knights A."/>
            <person name="Kube M."/>
            <person name="Larke N."/>
            <person name="Litvin L."/>
            <person name="Lord A."/>
            <person name="Louie T."/>
            <person name="Marra M."/>
            <person name="Masuy D."/>
            <person name="Matthews K."/>
            <person name="Michaeli S."/>
            <person name="Mottram J.C."/>
            <person name="Mueller-Auer S."/>
            <person name="Munden H."/>
            <person name="Nelson S."/>
            <person name="Norbertczak H."/>
            <person name="Oliver K."/>
            <person name="O'neil S."/>
            <person name="Pentony M."/>
            <person name="Pohl T.M."/>
            <person name="Price C."/>
            <person name="Purnelle B."/>
            <person name="Quail M.A."/>
            <person name="Rabbinowitsch E."/>
            <person name="Reinhardt R."/>
            <person name="Rieger M."/>
            <person name="Rinta J."/>
            <person name="Robben J."/>
            <person name="Robertson L."/>
            <person name="Ruiz J.C."/>
            <person name="Rutter S."/>
            <person name="Saunders D."/>
            <person name="Schaefer M."/>
            <person name="Schein J."/>
            <person name="Schwartz D.C."/>
            <person name="Seeger K."/>
            <person name="Seyler A."/>
            <person name="Sharp S."/>
            <person name="Shin H."/>
            <person name="Sivam D."/>
            <person name="Squares R."/>
            <person name="Squares S."/>
            <person name="Tosato V."/>
            <person name="Vogt C."/>
            <person name="Volckaert G."/>
            <person name="Wambutt R."/>
            <person name="Warren T."/>
            <person name="Wedler H."/>
            <person name="Woodward J."/>
            <person name="Zhou S."/>
            <person name="Zimmermann W."/>
            <person name="Smith D.F."/>
            <person name="Blackwell J.M."/>
            <person name="Stuart K.D."/>
            <person name="Barrell B.G."/>
            <person name="Myler P.J."/>
        </authorList>
    </citation>
    <scope>NUCLEOTIDE SEQUENCE [LARGE SCALE GENOMIC DNA]</scope>
    <source>
        <strain>MHOM/IL/81/Friedlin</strain>
    </source>
</reference>
<proteinExistence type="inferred from homology"/>
<accession>Q9U178</accession>
<accession>Q4QDF4</accession>
<name>UTP11_LEIMA</name>
<protein>
    <recommendedName>
        <fullName>Probable U3 small nucleolar RNA-associated protein 11</fullName>
        <shortName>U3 snoRNA-associated protein 11</shortName>
    </recommendedName>
</protein>
<feature type="chain" id="PRO_0000211047" description="Probable U3 small nucleolar RNA-associated protein 11">
    <location>
        <begin position="1"/>
        <end position="361"/>
    </location>
</feature>
<feature type="region of interest" description="Disordered" evidence="2">
    <location>
        <begin position="1"/>
        <end position="52"/>
    </location>
</feature>
<feature type="region of interest" description="Disordered" evidence="2">
    <location>
        <begin position="200"/>
        <end position="235"/>
    </location>
</feature>
<feature type="region of interest" description="Disordered" evidence="2">
    <location>
        <begin position="262"/>
        <end position="295"/>
    </location>
</feature>
<feature type="region of interest" description="Disordered" evidence="2">
    <location>
        <begin position="311"/>
        <end position="361"/>
    </location>
</feature>
<feature type="compositionally biased region" description="Basic residues" evidence="2">
    <location>
        <begin position="17"/>
        <end position="33"/>
    </location>
</feature>
<feature type="compositionally biased region" description="Basic and acidic residues" evidence="2">
    <location>
        <begin position="37"/>
        <end position="46"/>
    </location>
</feature>
<feature type="compositionally biased region" description="Basic and acidic residues" evidence="2">
    <location>
        <begin position="217"/>
        <end position="228"/>
    </location>
</feature>
<feature type="compositionally biased region" description="Acidic residues" evidence="2">
    <location>
        <begin position="278"/>
        <end position="287"/>
    </location>
</feature>
<feature type="compositionally biased region" description="Basic and acidic residues" evidence="2">
    <location>
        <begin position="342"/>
        <end position="352"/>
    </location>
</feature>
<comment type="function">
    <text evidence="1">Involved in nucleolar processing of pre-18S ribosomal RNA.</text>
</comment>
<comment type="subunit">
    <text evidence="1">Component of the ribosomal small subunit (SSU) processome.</text>
</comment>
<comment type="subcellular location">
    <subcellularLocation>
        <location evidence="1">Nucleus</location>
        <location evidence="1">Nucleolus</location>
    </subcellularLocation>
</comment>
<comment type="similarity">
    <text evidence="3">Belongs to the UTP11 family.</text>
</comment>
<organism>
    <name type="scientific">Leishmania major</name>
    <dbReference type="NCBI Taxonomy" id="5664"/>
    <lineage>
        <taxon>Eukaryota</taxon>
        <taxon>Discoba</taxon>
        <taxon>Euglenozoa</taxon>
        <taxon>Kinetoplastea</taxon>
        <taxon>Metakinetoplastina</taxon>
        <taxon>Trypanosomatida</taxon>
        <taxon>Trypanosomatidae</taxon>
        <taxon>Leishmaniinae</taxon>
        <taxon>Leishmania</taxon>
    </lineage>
</organism>
<dbReference type="EMBL" id="FR796415">
    <property type="protein sequence ID" value="CAJ07152.1"/>
    <property type="molecule type" value="Genomic_DNA"/>
</dbReference>
<dbReference type="RefSeq" id="XP_001682644.1">
    <property type="nucleotide sequence ID" value="XM_001682592.1"/>
</dbReference>
<dbReference type="FunCoup" id="Q9U178">
    <property type="interactions" value="235"/>
</dbReference>
<dbReference type="STRING" id="5664.Q9U178"/>
<dbReference type="EnsemblProtists" id="CAJ07152">
    <property type="protein sequence ID" value="CAJ07152"/>
    <property type="gene ID" value="LMJF_19_0670"/>
</dbReference>
<dbReference type="GeneID" id="5651166"/>
<dbReference type="KEGG" id="lma:LMJF_19_0670"/>
<dbReference type="VEuPathDB" id="TriTrypDB:LmjF.19.0670"/>
<dbReference type="VEuPathDB" id="TriTrypDB:LMJFC_190012800"/>
<dbReference type="VEuPathDB" id="TriTrypDB:LMJLV39_190012300"/>
<dbReference type="VEuPathDB" id="TriTrypDB:LMJSD75_190011900"/>
<dbReference type="eggNOG" id="KOG3237">
    <property type="taxonomic scope" value="Eukaryota"/>
</dbReference>
<dbReference type="InParanoid" id="Q9U178"/>
<dbReference type="OMA" id="HKDHVLR"/>
<dbReference type="Proteomes" id="UP000000542">
    <property type="component" value="Chromosome 19"/>
</dbReference>
<dbReference type="GO" id="GO:0005730">
    <property type="term" value="C:nucleolus"/>
    <property type="evidence" value="ECO:0000266"/>
    <property type="project" value="GeneDB"/>
</dbReference>
<dbReference type="GO" id="GO:0032040">
    <property type="term" value="C:small-subunit processome"/>
    <property type="evidence" value="ECO:0000318"/>
    <property type="project" value="GO_Central"/>
</dbReference>
<dbReference type="GO" id="GO:0006364">
    <property type="term" value="P:rRNA processing"/>
    <property type="evidence" value="ECO:0007669"/>
    <property type="project" value="UniProtKB-KW"/>
</dbReference>
<dbReference type="InterPro" id="IPR007144">
    <property type="entry name" value="SSU_processome_Utp11"/>
</dbReference>
<dbReference type="PANTHER" id="PTHR12838">
    <property type="entry name" value="U3 SMALL NUCLEOLAR RNA-ASSOCIATED PROTEIN 11"/>
    <property type="match status" value="1"/>
</dbReference>
<dbReference type="PANTHER" id="PTHR12838:SF0">
    <property type="entry name" value="U3 SMALL NUCLEOLAR RNA-ASSOCIATED PROTEIN 11-RELATED"/>
    <property type="match status" value="1"/>
</dbReference>
<dbReference type="Pfam" id="PF03998">
    <property type="entry name" value="Utp11"/>
    <property type="match status" value="1"/>
</dbReference>